<evidence type="ECO:0000250" key="1"/>
<evidence type="ECO:0000250" key="2">
    <source>
        <dbReference type="UniProtKB" id="C6KT66"/>
    </source>
</evidence>
<evidence type="ECO:0000250" key="3">
    <source>
        <dbReference type="UniProtKB" id="Q12640"/>
    </source>
</evidence>
<evidence type="ECO:0000256" key="4">
    <source>
        <dbReference type="SAM" id="MobiDB-lite"/>
    </source>
</evidence>
<evidence type="ECO:0000269" key="5">
    <source>
    </source>
</evidence>
<evidence type="ECO:0000303" key="6">
    <source>
    </source>
</evidence>
<evidence type="ECO:0000305" key="7"/>
<comment type="function">
    <text evidence="5">Bifunctional chorismate synthase and flavin reductase (PubMed:17662045). Catalyzes the conversion of 5-enolpyruvylshikimate 3-phosphate (EPSP) to form chorismate (PubMed:17662045). Acts also as a flavin reductase (FR) able to generate reduced flavin mononucleotide in the presence of NADPH (PubMed:17662045).</text>
</comment>
<comment type="catalytic activity">
    <reaction evidence="2">
        <text>5-O-(1-carboxyvinyl)-3-phosphoshikimate = chorismate + phosphate</text>
        <dbReference type="Rhea" id="RHEA:21020"/>
        <dbReference type="ChEBI" id="CHEBI:29748"/>
        <dbReference type="ChEBI" id="CHEBI:43474"/>
        <dbReference type="ChEBI" id="CHEBI:57701"/>
        <dbReference type="EC" id="4.2.3.5"/>
    </reaction>
    <physiologicalReaction direction="left-to-right" evidence="7">
        <dbReference type="Rhea" id="RHEA:21021"/>
    </physiologicalReaction>
</comment>
<comment type="catalytic activity">
    <reaction evidence="5">
        <text>FMNH2 + NADP(+) = FMN + NADPH + 2 H(+)</text>
        <dbReference type="Rhea" id="RHEA:21624"/>
        <dbReference type="ChEBI" id="CHEBI:15378"/>
        <dbReference type="ChEBI" id="CHEBI:57618"/>
        <dbReference type="ChEBI" id="CHEBI:57783"/>
        <dbReference type="ChEBI" id="CHEBI:58210"/>
        <dbReference type="ChEBI" id="CHEBI:58349"/>
        <dbReference type="EC" id="1.5.1.38"/>
    </reaction>
    <physiologicalReaction direction="right-to-left" evidence="7">
        <dbReference type="Rhea" id="RHEA:21626"/>
    </physiologicalReaction>
</comment>
<comment type="cofactor">
    <cofactor evidence="1">
        <name>FMNH2</name>
        <dbReference type="ChEBI" id="CHEBI:57618"/>
    </cofactor>
</comment>
<comment type="pathway">
    <text evidence="3">Metabolic intermediate biosynthesis; chorismate biosynthesis; chorismate from D-erythrose 4-phosphate and phosphoenolpyruvate: step 7/7.</text>
</comment>
<comment type="similarity">
    <text evidence="7">Belongs to the chorismate synthase family.</text>
</comment>
<accession>O02607</accession>
<name>AROC_TOXGO</name>
<organism>
    <name type="scientific">Toxoplasma gondii</name>
    <dbReference type="NCBI Taxonomy" id="5811"/>
    <lineage>
        <taxon>Eukaryota</taxon>
        <taxon>Sar</taxon>
        <taxon>Alveolata</taxon>
        <taxon>Apicomplexa</taxon>
        <taxon>Conoidasida</taxon>
        <taxon>Coccidia</taxon>
        <taxon>Eucoccidiorida</taxon>
        <taxon>Eimeriorina</taxon>
        <taxon>Sarcocystidae</taxon>
        <taxon>Toxoplasma</taxon>
    </lineage>
</organism>
<dbReference type="EC" id="1.5.1.38" evidence="5"/>
<dbReference type="EC" id="4.2.3.5" evidence="2"/>
<dbReference type="EMBL" id="U93689">
    <property type="protein sequence ID" value="AAB52422.1"/>
    <property type="molecule type" value="mRNA"/>
</dbReference>
<dbReference type="SMR" id="O02607"/>
<dbReference type="VEuPathDB" id="ToxoDB:TGARI_201380"/>
<dbReference type="VEuPathDB" id="ToxoDB:TGCAST_201380"/>
<dbReference type="VEuPathDB" id="ToxoDB:TGCOUG_201380"/>
<dbReference type="VEuPathDB" id="ToxoDB:TGDOM2_201380"/>
<dbReference type="VEuPathDB" id="ToxoDB:TGFOU_201380"/>
<dbReference type="VEuPathDB" id="ToxoDB:TGGT1_201380"/>
<dbReference type="VEuPathDB" id="ToxoDB:TGMAS_201380"/>
<dbReference type="VEuPathDB" id="ToxoDB:TGME49_201380"/>
<dbReference type="VEuPathDB" id="ToxoDB:TGP89_201380"/>
<dbReference type="VEuPathDB" id="ToxoDB:TGPRC2_201380"/>
<dbReference type="VEuPathDB" id="ToxoDB:TGRH88_037370"/>
<dbReference type="VEuPathDB" id="ToxoDB:TGRUB_201380"/>
<dbReference type="VEuPathDB" id="ToxoDB:TGVAND_201380"/>
<dbReference type="VEuPathDB" id="ToxoDB:TGVEG_201380"/>
<dbReference type="UniPathway" id="UPA00053">
    <property type="reaction ID" value="UER00090"/>
</dbReference>
<dbReference type="GO" id="GO:0005829">
    <property type="term" value="C:cytosol"/>
    <property type="evidence" value="ECO:0007669"/>
    <property type="project" value="TreeGrafter"/>
</dbReference>
<dbReference type="GO" id="GO:0004107">
    <property type="term" value="F:chorismate synthase activity"/>
    <property type="evidence" value="ECO:0007669"/>
    <property type="project" value="UniProtKB-EC"/>
</dbReference>
<dbReference type="GO" id="GO:0010181">
    <property type="term" value="F:FMN binding"/>
    <property type="evidence" value="ECO:0007669"/>
    <property type="project" value="TreeGrafter"/>
</dbReference>
<dbReference type="GO" id="GO:0008652">
    <property type="term" value="P:amino acid biosynthetic process"/>
    <property type="evidence" value="ECO:0007669"/>
    <property type="project" value="UniProtKB-KW"/>
</dbReference>
<dbReference type="GO" id="GO:0009073">
    <property type="term" value="P:aromatic amino acid family biosynthetic process"/>
    <property type="evidence" value="ECO:0007669"/>
    <property type="project" value="UniProtKB-KW"/>
</dbReference>
<dbReference type="GO" id="GO:0009423">
    <property type="term" value="P:chorismate biosynthetic process"/>
    <property type="evidence" value="ECO:0007669"/>
    <property type="project" value="UniProtKB-UniPathway"/>
</dbReference>
<dbReference type="CDD" id="cd07304">
    <property type="entry name" value="Chorismate_synthase"/>
    <property type="match status" value="1"/>
</dbReference>
<dbReference type="Gene3D" id="3.60.150.10">
    <property type="entry name" value="Chorismate synthase AroC"/>
    <property type="match status" value="2"/>
</dbReference>
<dbReference type="HAMAP" id="MF_00300">
    <property type="entry name" value="Chorismate_synth"/>
    <property type="match status" value="1"/>
</dbReference>
<dbReference type="InterPro" id="IPR000453">
    <property type="entry name" value="Chorismate_synth"/>
</dbReference>
<dbReference type="InterPro" id="IPR035904">
    <property type="entry name" value="Chorismate_synth_AroC_sf"/>
</dbReference>
<dbReference type="InterPro" id="IPR020541">
    <property type="entry name" value="Chorismate_synthase_CS"/>
</dbReference>
<dbReference type="PANTHER" id="PTHR21085">
    <property type="entry name" value="CHORISMATE SYNTHASE"/>
    <property type="match status" value="1"/>
</dbReference>
<dbReference type="PANTHER" id="PTHR21085:SF0">
    <property type="entry name" value="CHORISMATE SYNTHASE"/>
    <property type="match status" value="1"/>
</dbReference>
<dbReference type="Pfam" id="PF01264">
    <property type="entry name" value="Chorismate_synt"/>
    <property type="match status" value="2"/>
</dbReference>
<dbReference type="SUPFAM" id="SSF103263">
    <property type="entry name" value="Chorismate synthase, AroC"/>
    <property type="match status" value="2"/>
</dbReference>
<dbReference type="PROSITE" id="PS00787">
    <property type="entry name" value="CHORISMATE_SYNTHASE_1"/>
    <property type="match status" value="1"/>
</dbReference>
<dbReference type="PROSITE" id="PS00788">
    <property type="entry name" value="CHORISMATE_SYNTHASE_2"/>
    <property type="match status" value="1"/>
</dbReference>
<dbReference type="PROSITE" id="PS00789">
    <property type="entry name" value="CHORISMATE_SYNTHASE_3"/>
    <property type="match status" value="1"/>
</dbReference>
<sequence length="536" mass="58144">MSSYGAALRIHTFGESHGSAVGCIIDGLPPRLPLSVEDVQPQLNRRRPGQGPLSTQRREKDRVNILSGVEDGYTLGTPLAMLVWNEDRRPQEYHALATVPRPGHGDFTYHAKYHIHAKSGGGRSSARETLARVAAGAVVEKWLGMHYGTSFTAWVCQVGDVSVPRSLRRKWERQPPTRQDVDRLGVVRVSPDGTTFLDANNRLYDERGEELVEEEDKARRRLLFGVDNPTPGETVIETRCPCPSTAVRMAVKINQTRSLGDSIGGCISGAIVRPPLGLGEPCFDKVEAELAKAMMSLPATKGFEIGQGFASVTLRGSEHNDRFIPFERASCSFSESAASTIKHERDGCSAATLSRERASDGRTTSRHEEEVERGRERIQRDTLHVTGVDQQNGNSEDSVRYTSKSEASITRLSGNAASGGAPVCRIPLGEGVRIRCGSNNAGGTLAGITSGENIFFRVAFKPVSSIGLEQETADFAGEMNQLAVKGRHDPCVLPRAPPLVESMAALVIGDLCLRQRAREGPHPLLVLPQHSGCPSC</sequence>
<gene>
    <name type="primary">AROC</name>
</gene>
<feature type="chain" id="PRO_0000140701" description="Chorismate synthase">
    <location>
        <begin position="1"/>
        <end position="536"/>
    </location>
</feature>
<feature type="region of interest" description="Disordered" evidence="4">
    <location>
        <begin position="37"/>
        <end position="59"/>
    </location>
</feature>
<feature type="region of interest" description="Disordered" evidence="4">
    <location>
        <begin position="344"/>
        <end position="377"/>
    </location>
</feature>
<feature type="compositionally biased region" description="Basic and acidic residues" evidence="4">
    <location>
        <begin position="354"/>
        <end position="377"/>
    </location>
</feature>
<feature type="active site" evidence="3">
    <location>
        <position position="17"/>
    </location>
</feature>
<feature type="active site" evidence="3">
    <location>
        <position position="104"/>
    </location>
</feature>
<feature type="active site" evidence="3">
    <location>
        <position position="489"/>
    </location>
</feature>
<reference key="1">
    <citation type="submission" date="1997-04" db="EMBL/GenBank/DDBJ databases">
        <authorList>
            <person name="Roberts F."/>
            <person name="Roberts C.W."/>
            <person name="Johnson J.J."/>
            <person name="Milhous W."/>
            <person name="Kyle D."/>
            <person name="Tzipori S."/>
            <person name="Ferguson D.J.P."/>
        </authorList>
    </citation>
    <scope>NUCLEOTIDE SEQUENCE [MRNA]</scope>
    <source>
        <strain>RH</strain>
    </source>
</reference>
<reference key="2">
    <citation type="journal article" date="2007" name="Mol. Microbiol.">
        <title>Conservation of NADPH utilization by chorismate synthase and its implications for the evolution of the shikimate pathway.</title>
        <authorList>
            <person name="Ehammer H."/>
            <person name="Rauch G."/>
            <person name="Prem A."/>
            <person name="Kappes B."/>
            <person name="Macheroux P."/>
        </authorList>
    </citation>
    <scope>FUNCTION</scope>
    <scope>CATALYTIC ACTIVITY</scope>
</reference>
<keyword id="KW-0028">Amino-acid biosynthesis</keyword>
<keyword id="KW-0057">Aromatic amino acid biosynthesis</keyword>
<keyword id="KW-0456">Lyase</keyword>
<keyword id="KW-0560">Oxidoreductase</keyword>
<protein>
    <recommendedName>
        <fullName evidence="6">Chorismate synthase</fullName>
        <shortName evidence="6">TgCS</shortName>
        <ecNumber evidence="5">1.5.1.38</ecNumber>
        <ecNumber evidence="2">4.2.3.5</ecNumber>
    </recommendedName>
    <alternativeName>
        <fullName>5-enolpyruvylshikimate-3-phosphate phospholyase</fullName>
    </alternativeName>
</protein>
<proteinExistence type="evidence at protein level"/>